<gene>
    <name type="ORF">ORF116</name>
</gene>
<protein>
    <recommendedName>
        <fullName>Uncharacterized protein ORF116</fullName>
    </recommendedName>
</protein>
<proteinExistence type="predicted"/>
<feature type="chain" id="PRO_0000384554" description="Uncharacterized protein ORF116">
    <location>
        <begin position="1"/>
        <end position="116"/>
    </location>
</feature>
<dbReference type="EMBL" id="AJ567472">
    <property type="protein sequence ID" value="CAD98966.1"/>
    <property type="molecule type" value="Genomic_DNA"/>
</dbReference>
<dbReference type="RefSeq" id="YP_003762.1">
    <property type="nucleotide sequence ID" value="NC_005830.1"/>
</dbReference>
<dbReference type="SMR" id="Q70LB4"/>
<dbReference type="KEGG" id="vg:2769173"/>
<dbReference type="Proteomes" id="UP000000514">
    <property type="component" value="Genome"/>
</dbReference>
<dbReference type="Gene3D" id="3.40.50.11170">
    <property type="entry name" value="Uncharacterised protein PF08960, DUF1874"/>
    <property type="match status" value="1"/>
</dbReference>
<dbReference type="InterPro" id="IPR015055">
    <property type="entry name" value="STIV_B116-like"/>
</dbReference>
<dbReference type="InterPro" id="IPR037236">
    <property type="entry name" value="STIV_B116-like_sf"/>
</dbReference>
<dbReference type="Pfam" id="PF08960">
    <property type="entry name" value="STIV_B116-like"/>
    <property type="match status" value="1"/>
</dbReference>
<dbReference type="SUPFAM" id="SSF143602">
    <property type="entry name" value="STIV B116-like"/>
    <property type="match status" value="1"/>
</dbReference>
<accession>Q70LB4</accession>
<keyword id="KW-1185">Reference proteome</keyword>
<organism>
    <name type="scientific">Acidianus filamentous virus 1 (isolate United States/Yellowstone)</name>
    <name type="common">AFV-1</name>
    <dbReference type="NCBI Taxonomy" id="654909"/>
    <lineage>
        <taxon>Viruses</taxon>
        <taxon>Adnaviria</taxon>
        <taxon>Zilligvirae</taxon>
        <taxon>Taleaviricota</taxon>
        <taxon>Tokiviricetes</taxon>
        <taxon>Ligamenvirales</taxon>
        <taxon>Ungulaviridae</taxon>
        <taxon>Captovirus</taxon>
        <taxon>Acidianus filamentous virus 1</taxon>
    </lineage>
</organism>
<reference key="1">
    <citation type="journal article" date="2003" name="Virology">
        <title>AFV1, a novel virus infecting hyperthermophilic archaea of the genus acidianus.</title>
        <authorList>
            <person name="Bettstetter M."/>
            <person name="Peng X."/>
            <person name="Garrett R.A."/>
            <person name="Prangishvili D."/>
        </authorList>
    </citation>
    <scope>NUCLEOTIDE SEQUENCE [GENOMIC DNA]</scope>
</reference>
<sequence length="116" mass="12920">MGSYLLNGFSPAMLASGHSVVFFNQIPDVMLCGALTSDELVNAIGHKSTINLINRICQTNLKENRIQVMLQDGDEAFIVVVTERLEEGKVLSDEEITKMFEDGKIKIYYARVHSVV</sequence>
<organismHost>
    <name type="scientific">Acidianus hospitalis</name>
    <dbReference type="NCBI Taxonomy" id="563177"/>
</organismHost>
<organismHost>
    <name type="scientific">Acidianus infernus</name>
    <dbReference type="NCBI Taxonomy" id="12915"/>
</organismHost>
<name>Y116_AFV1Y</name>